<evidence type="ECO:0000255" key="1">
    <source>
        <dbReference type="HAMAP-Rule" id="MF_00549"/>
    </source>
</evidence>
<organism>
    <name type="scientific">Burkholderia mallei (strain SAVP1)</name>
    <dbReference type="NCBI Taxonomy" id="320388"/>
    <lineage>
        <taxon>Bacteria</taxon>
        <taxon>Pseudomonadati</taxon>
        <taxon>Pseudomonadota</taxon>
        <taxon>Betaproteobacteria</taxon>
        <taxon>Burkholderiales</taxon>
        <taxon>Burkholderiaceae</taxon>
        <taxon>Burkholderia</taxon>
        <taxon>pseudomallei group</taxon>
    </lineage>
</organism>
<accession>A1V2G6</accession>
<comment type="function">
    <text evidence="1">Catalyzes the formation of methylglyoxal from dihydroxyacetone phosphate.</text>
</comment>
<comment type="catalytic activity">
    <reaction evidence="1">
        <text>dihydroxyacetone phosphate = methylglyoxal + phosphate</text>
        <dbReference type="Rhea" id="RHEA:17937"/>
        <dbReference type="ChEBI" id="CHEBI:17158"/>
        <dbReference type="ChEBI" id="CHEBI:43474"/>
        <dbReference type="ChEBI" id="CHEBI:57642"/>
        <dbReference type="EC" id="4.2.3.3"/>
    </reaction>
</comment>
<comment type="similarity">
    <text evidence="1">Belongs to the methylglyoxal synthase family.</text>
</comment>
<sequence length="130" mass="13654">MSTPRIALIAHDAKKDDIVALAGAYRATLAQCRLVATGTTGGRIAQAHGLDVERKLSGPLGGDLQIGAELADGRVDIVIFLRDPMTAQPHDPDITALVRACDVHDVPVATNVATARVLLDDLARRLTANA</sequence>
<dbReference type="EC" id="4.2.3.3" evidence="1"/>
<dbReference type="EMBL" id="CP000526">
    <property type="protein sequence ID" value="ABM51200.1"/>
    <property type="molecule type" value="Genomic_DNA"/>
</dbReference>
<dbReference type="RefSeq" id="WP_004186317.1">
    <property type="nucleotide sequence ID" value="NC_008785.1"/>
</dbReference>
<dbReference type="SMR" id="A1V2G6"/>
<dbReference type="KEGG" id="bmv:BMASAVP1_A1079"/>
<dbReference type="HOGENOM" id="CLU_120420_1_0_4"/>
<dbReference type="GO" id="GO:0005829">
    <property type="term" value="C:cytosol"/>
    <property type="evidence" value="ECO:0007669"/>
    <property type="project" value="TreeGrafter"/>
</dbReference>
<dbReference type="GO" id="GO:0008929">
    <property type="term" value="F:methylglyoxal synthase activity"/>
    <property type="evidence" value="ECO:0007669"/>
    <property type="project" value="UniProtKB-UniRule"/>
</dbReference>
<dbReference type="GO" id="GO:0019242">
    <property type="term" value="P:methylglyoxal biosynthetic process"/>
    <property type="evidence" value="ECO:0007669"/>
    <property type="project" value="UniProtKB-UniRule"/>
</dbReference>
<dbReference type="CDD" id="cd01422">
    <property type="entry name" value="MGS"/>
    <property type="match status" value="1"/>
</dbReference>
<dbReference type="Gene3D" id="3.40.50.1380">
    <property type="entry name" value="Methylglyoxal synthase-like domain"/>
    <property type="match status" value="1"/>
</dbReference>
<dbReference type="HAMAP" id="MF_00549">
    <property type="entry name" value="Methylglyoxal_synth"/>
    <property type="match status" value="1"/>
</dbReference>
<dbReference type="InterPro" id="IPR004363">
    <property type="entry name" value="Methylgl_synth"/>
</dbReference>
<dbReference type="InterPro" id="IPR018148">
    <property type="entry name" value="Methylglyoxal_synth_AS"/>
</dbReference>
<dbReference type="InterPro" id="IPR011607">
    <property type="entry name" value="MGS-like_dom"/>
</dbReference>
<dbReference type="InterPro" id="IPR036914">
    <property type="entry name" value="MGS-like_dom_sf"/>
</dbReference>
<dbReference type="NCBIfam" id="TIGR00160">
    <property type="entry name" value="MGSA"/>
    <property type="match status" value="1"/>
</dbReference>
<dbReference type="NCBIfam" id="NF003559">
    <property type="entry name" value="PRK05234.1"/>
    <property type="match status" value="1"/>
</dbReference>
<dbReference type="PANTHER" id="PTHR30492">
    <property type="entry name" value="METHYLGLYOXAL SYNTHASE"/>
    <property type="match status" value="1"/>
</dbReference>
<dbReference type="PANTHER" id="PTHR30492:SF0">
    <property type="entry name" value="METHYLGLYOXAL SYNTHASE"/>
    <property type="match status" value="1"/>
</dbReference>
<dbReference type="Pfam" id="PF02142">
    <property type="entry name" value="MGS"/>
    <property type="match status" value="1"/>
</dbReference>
<dbReference type="PIRSF" id="PIRSF006614">
    <property type="entry name" value="Methylglyox_syn"/>
    <property type="match status" value="1"/>
</dbReference>
<dbReference type="SMART" id="SM00851">
    <property type="entry name" value="MGS"/>
    <property type="match status" value="1"/>
</dbReference>
<dbReference type="SUPFAM" id="SSF52335">
    <property type="entry name" value="Methylglyoxal synthase-like"/>
    <property type="match status" value="1"/>
</dbReference>
<dbReference type="PROSITE" id="PS01335">
    <property type="entry name" value="METHYLGLYOXAL_SYNTH"/>
    <property type="match status" value="1"/>
</dbReference>
<dbReference type="PROSITE" id="PS51855">
    <property type="entry name" value="MGS"/>
    <property type="match status" value="1"/>
</dbReference>
<name>MGSA_BURMS</name>
<keyword id="KW-0456">Lyase</keyword>
<feature type="chain" id="PRO_1000017794" description="Methylglyoxal synthase">
    <location>
        <begin position="1"/>
        <end position="130"/>
    </location>
</feature>
<feature type="domain" description="MGS-like" evidence="1">
    <location>
        <begin position="1"/>
        <end position="130"/>
    </location>
</feature>
<feature type="active site" description="Proton donor/acceptor" evidence="1">
    <location>
        <position position="63"/>
    </location>
</feature>
<feature type="binding site" evidence="1">
    <location>
        <position position="11"/>
    </location>
    <ligand>
        <name>substrate</name>
    </ligand>
</feature>
<feature type="binding site" evidence="1">
    <location>
        <position position="15"/>
    </location>
    <ligand>
        <name>substrate</name>
    </ligand>
</feature>
<feature type="binding site" evidence="1">
    <location>
        <begin position="37"/>
        <end position="40"/>
    </location>
    <ligand>
        <name>substrate</name>
    </ligand>
</feature>
<feature type="binding site" evidence="1">
    <location>
        <begin position="57"/>
        <end position="58"/>
    </location>
    <ligand>
        <name>substrate</name>
    </ligand>
</feature>
<feature type="binding site" evidence="1">
    <location>
        <position position="90"/>
    </location>
    <ligand>
        <name>substrate</name>
    </ligand>
</feature>
<reference key="1">
    <citation type="journal article" date="2010" name="Genome Biol. Evol.">
        <title>Continuing evolution of Burkholderia mallei through genome reduction and large-scale rearrangements.</title>
        <authorList>
            <person name="Losada L."/>
            <person name="Ronning C.M."/>
            <person name="DeShazer D."/>
            <person name="Woods D."/>
            <person name="Fedorova N."/>
            <person name="Kim H.S."/>
            <person name="Shabalina S.A."/>
            <person name="Pearson T.R."/>
            <person name="Brinkac L."/>
            <person name="Tan P."/>
            <person name="Nandi T."/>
            <person name="Crabtree J."/>
            <person name="Badger J."/>
            <person name="Beckstrom-Sternberg S."/>
            <person name="Saqib M."/>
            <person name="Schutzer S.E."/>
            <person name="Keim P."/>
            <person name="Nierman W.C."/>
        </authorList>
    </citation>
    <scope>NUCLEOTIDE SEQUENCE [LARGE SCALE GENOMIC DNA]</scope>
    <source>
        <strain>SAVP1</strain>
    </source>
</reference>
<protein>
    <recommendedName>
        <fullName evidence="1">Methylglyoxal synthase</fullName>
        <shortName evidence="1">MGS</shortName>
        <ecNumber evidence="1">4.2.3.3</ecNumber>
    </recommendedName>
</protein>
<proteinExistence type="inferred from homology"/>
<gene>
    <name evidence="1" type="primary">mgsA</name>
    <name type="ordered locus">BMASAVP1_A1079</name>
</gene>